<dbReference type="EC" id="2.7.7.-" evidence="1"/>
<dbReference type="EMBL" id="U33754">
    <property type="protein sequence ID" value="AAC49498.1"/>
    <property type="status" value="ALT_FRAME"/>
    <property type="molecule type" value="Genomic_DNA"/>
</dbReference>
<dbReference type="EMBL" id="Z72733">
    <property type="protein sequence ID" value="CAA96927.1"/>
    <property type="status" value="ALT_FRAME"/>
    <property type="molecule type" value="Genomic_DNA"/>
</dbReference>
<dbReference type="EMBL" id="BK006941">
    <property type="protein sequence ID" value="DAA07905.1"/>
    <property type="molecule type" value="Genomic_DNA"/>
</dbReference>
<dbReference type="PIR" id="S71668">
    <property type="entry name" value="S64230"/>
</dbReference>
<dbReference type="RefSeq" id="NP_011304.2">
    <property type="nucleotide sequence ID" value="NM_001181076.1"/>
</dbReference>
<dbReference type="SMR" id="P53088"/>
<dbReference type="BioGRID" id="33045">
    <property type="interactions" value="326"/>
</dbReference>
<dbReference type="DIP" id="DIP-7935N"/>
<dbReference type="FunCoup" id="P53088">
    <property type="interactions" value="546"/>
</dbReference>
<dbReference type="IntAct" id="P53088">
    <property type="interactions" value="9"/>
</dbReference>
<dbReference type="STRING" id="4932.YGL211W"/>
<dbReference type="iPTMnet" id="P53088"/>
<dbReference type="PaxDb" id="4932-YGL211W"/>
<dbReference type="PeptideAtlas" id="P53088"/>
<dbReference type="EnsemblFungi" id="YGL211W_mRNA">
    <property type="protein sequence ID" value="YGL211W"/>
    <property type="gene ID" value="YGL211W"/>
</dbReference>
<dbReference type="GeneID" id="852661"/>
<dbReference type="KEGG" id="sce:YGL211W"/>
<dbReference type="AGR" id="SGD:S000003179"/>
<dbReference type="SGD" id="S000003179">
    <property type="gene designation" value="NCS6"/>
</dbReference>
<dbReference type="VEuPathDB" id="FungiDB:YGL211W"/>
<dbReference type="eggNOG" id="KOG2840">
    <property type="taxonomic scope" value="Eukaryota"/>
</dbReference>
<dbReference type="GeneTree" id="ENSGT00390000001041"/>
<dbReference type="HOGENOM" id="CLU_026481_1_0_1"/>
<dbReference type="InParanoid" id="P53088"/>
<dbReference type="OMA" id="KPVRGIC"/>
<dbReference type="OrthoDB" id="198857at2759"/>
<dbReference type="BioCyc" id="YEAST:G3O-30688-MONOMER"/>
<dbReference type="UniPathway" id="UPA00988"/>
<dbReference type="BioGRID-ORCS" id="852661">
    <property type="hits" value="7 hits in 10 CRISPR screens"/>
</dbReference>
<dbReference type="PRO" id="PR:P53088"/>
<dbReference type="Proteomes" id="UP000002311">
    <property type="component" value="Chromosome VII"/>
</dbReference>
<dbReference type="RNAct" id="P53088">
    <property type="molecule type" value="protein"/>
</dbReference>
<dbReference type="GO" id="GO:0005829">
    <property type="term" value="C:cytosol"/>
    <property type="evidence" value="ECO:0000314"/>
    <property type="project" value="UniProtKB"/>
</dbReference>
<dbReference type="GO" id="GO:0002144">
    <property type="term" value="C:cytosolic tRNA wobble base thiouridylase complex"/>
    <property type="evidence" value="ECO:0000318"/>
    <property type="project" value="GO_Central"/>
</dbReference>
<dbReference type="GO" id="GO:0005739">
    <property type="term" value="C:mitochondrion"/>
    <property type="evidence" value="ECO:0007005"/>
    <property type="project" value="SGD"/>
</dbReference>
<dbReference type="GO" id="GO:0005777">
    <property type="term" value="C:peroxisome"/>
    <property type="evidence" value="ECO:0000314"/>
    <property type="project" value="SGD"/>
</dbReference>
<dbReference type="GO" id="GO:0016779">
    <property type="term" value="F:nucleotidyltransferase activity"/>
    <property type="evidence" value="ECO:0000314"/>
    <property type="project" value="UniProtKB"/>
</dbReference>
<dbReference type="GO" id="GO:0000049">
    <property type="term" value="F:tRNA binding"/>
    <property type="evidence" value="ECO:0000314"/>
    <property type="project" value="UniProtKB"/>
</dbReference>
<dbReference type="GO" id="GO:0032447">
    <property type="term" value="P:protein urmylation"/>
    <property type="evidence" value="ECO:0000315"/>
    <property type="project" value="SGD"/>
</dbReference>
<dbReference type="GO" id="GO:0034227">
    <property type="term" value="P:tRNA thio-modification"/>
    <property type="evidence" value="ECO:0000315"/>
    <property type="project" value="UniProtKB"/>
</dbReference>
<dbReference type="GO" id="GO:0002143">
    <property type="term" value="P:tRNA wobble position uridine thiolation"/>
    <property type="evidence" value="ECO:0000315"/>
    <property type="project" value="SGD"/>
</dbReference>
<dbReference type="GO" id="GO:0002098">
    <property type="term" value="P:tRNA wobble uridine modification"/>
    <property type="evidence" value="ECO:0000315"/>
    <property type="project" value="UniProtKB"/>
</dbReference>
<dbReference type="CDD" id="cd01713">
    <property type="entry name" value="CTU1-like"/>
    <property type="match status" value="1"/>
</dbReference>
<dbReference type="FunFam" id="3.40.50.620:FF:000188">
    <property type="entry name" value="Cytoplasmic tRNA 2-thiolation protein 1"/>
    <property type="match status" value="1"/>
</dbReference>
<dbReference type="Gene3D" id="3.40.50.620">
    <property type="entry name" value="HUPs"/>
    <property type="match status" value="1"/>
</dbReference>
<dbReference type="HAMAP" id="MF_03053">
    <property type="entry name" value="CTU1"/>
    <property type="match status" value="1"/>
</dbReference>
<dbReference type="InterPro" id="IPR056369">
    <property type="entry name" value="CTU1-like_ATP-bd"/>
</dbReference>
<dbReference type="InterPro" id="IPR032442">
    <property type="entry name" value="CTU1_C"/>
</dbReference>
<dbReference type="InterPro" id="IPR000541">
    <property type="entry name" value="Ncs6/Tuc1/Ctu1"/>
</dbReference>
<dbReference type="InterPro" id="IPR014729">
    <property type="entry name" value="Rossmann-like_a/b/a_fold"/>
</dbReference>
<dbReference type="InterPro" id="IPR011063">
    <property type="entry name" value="TilS/TtcA_N"/>
</dbReference>
<dbReference type="InterPro" id="IPR035107">
    <property type="entry name" value="tRNA_thiolation_TtcA_Ctu1"/>
</dbReference>
<dbReference type="InterPro" id="IPR020554">
    <property type="entry name" value="UPF0021_CS"/>
</dbReference>
<dbReference type="PANTHER" id="PTHR11807">
    <property type="entry name" value="ATPASES OF THE PP SUPERFAMILY-RELATED"/>
    <property type="match status" value="1"/>
</dbReference>
<dbReference type="PANTHER" id="PTHR11807:SF12">
    <property type="entry name" value="CYTOPLASMIC TRNA 2-THIOLATION PROTEIN 1"/>
    <property type="match status" value="1"/>
</dbReference>
<dbReference type="Pfam" id="PF01171">
    <property type="entry name" value="ATP_bind_3"/>
    <property type="match status" value="1"/>
</dbReference>
<dbReference type="Pfam" id="PF16503">
    <property type="entry name" value="zn-ribbon_14"/>
    <property type="match status" value="1"/>
</dbReference>
<dbReference type="PIRSF" id="PIRSF004976">
    <property type="entry name" value="ATPase_YdaO"/>
    <property type="match status" value="1"/>
</dbReference>
<dbReference type="SUPFAM" id="SSF52402">
    <property type="entry name" value="Adenine nucleotide alpha hydrolases-like"/>
    <property type="match status" value="1"/>
</dbReference>
<dbReference type="PROSITE" id="PS01263">
    <property type="entry name" value="UPF0021"/>
    <property type="match status" value="1"/>
</dbReference>
<keyword id="KW-0963">Cytoplasm</keyword>
<keyword id="KW-0496">Mitochondrion</keyword>
<keyword id="KW-1185">Reference proteome</keyword>
<keyword id="KW-0694">RNA-binding</keyword>
<keyword id="KW-0808">Transferase</keyword>
<keyword id="KW-0819">tRNA processing</keyword>
<keyword id="KW-0820">tRNA-binding</keyword>
<comment type="function">
    <text evidence="1 2 3 4 5 6 7 8">Plays a central role in 2-thiolation of mcm(5)S(2)U at tRNA wobble positions of tRNA(Lys), tRNA(Glu) and tRNA(Gln). Directly binds tRNAs and probably acts by catalyzing adenylation of tRNAs, an intermediate required for 2-thiolation. It is unclear whether it acts as a sulfurtransferase that transfers sulfur from thiocarboxylated URM1 onto the uridine of tRNAs at wobble position. Prior mcm(5) tRNA modification by the elongator complex is required for 2-thiolation. May also be involved in protein urmylation. May also be involved in protein urmylation and in invasive and pseudohyphal growth.</text>
</comment>
<comment type="pathway">
    <text evidence="1">tRNA modification; 5-methoxycarbonylmethyl-2-thiouridine-tRNA biosynthesis.</text>
</comment>
<comment type="subunit">
    <text evidence="1 5 7">Interacts with NCS2 and URM1. May act by forming a heterodimer with NCS2. Component of a large molecular weight complex of more than 250 kDa.</text>
</comment>
<comment type="interaction">
    <interactant intactId="EBI-24137">
        <id>P53088</id>
    </interactant>
    <interactant intactId="EBI-28871">
        <id>P53923</id>
        <label>NCS2</label>
    </interactant>
    <organismsDiffer>false</organismsDiffer>
    <experiments>4</experiments>
</comment>
<comment type="interaction">
    <interactant intactId="EBI-24137">
        <id>P53088</id>
    </interactant>
    <interactant intactId="EBI-24940">
        <id>P40554</id>
        <label>URM1</label>
    </interactant>
    <organismsDiffer>false</organismsDiffer>
    <experiments>4</experiments>
</comment>
<comment type="subcellular location">
    <subcellularLocation>
        <location>Cytoplasm</location>
    </subcellularLocation>
    <subcellularLocation>
        <location>Mitochondrion</location>
    </subcellularLocation>
</comment>
<comment type="similarity">
    <text evidence="1">Belongs to the TtcA family. CTU1/NCS6/ATPBD3 subfamily.</text>
</comment>
<comment type="sequence caution" evidence="9">
    <conflict type="frameshift">
        <sequence resource="EMBL-CDS" id="AAC49498"/>
    </conflict>
</comment>
<comment type="sequence caution" evidence="9">
    <conflict type="frameshift">
        <sequence resource="EMBL-CDS" id="CAA96927"/>
    </conflict>
</comment>
<gene>
    <name evidence="1" type="primary">NCS6</name>
    <name evidence="1" type="synonym">CTU1</name>
    <name evidence="1" type="synonym">TUC1</name>
    <name type="ordered locus">YGL211W</name>
    <name type="ORF">YGL210W-A</name>
</gene>
<protein>
    <recommendedName>
        <fullName evidence="1">Cytoplasmic tRNA 2-thiolation protein 1</fullName>
        <ecNumber evidence="1">2.7.7.-</ecNumber>
    </recommendedName>
    <alternativeName>
        <fullName evidence="1">Cytoplasmic tRNA adenylyltransferase 1</fullName>
    </alternativeName>
    <alternativeName>
        <fullName evidence="1">Needs CLA4 to survive protein 6</fullName>
    </alternativeName>
    <alternativeName>
        <fullName evidence="1">Thiolation of uridine in cytoplasmic tRNA protein 1</fullName>
    </alternativeName>
</protein>
<sequence>MSFTAPSDPVNKPTKVKVSQLCELCHSRKALIRRPKNLSKLCKQCFCLVFETEIHNTIVANNLFQRGEKVAVGASGGKDSTVLAHMLKLLNDRYDYGIEIVLLSIDEGIIGYRDDSLATVKRNQQQYGLPLEIFSFKDLYDWTMDEIVSVAGIRNSCTYCGVFRRQSLDRGAAKLGISHVVTGHNADDMAETVLMNILRGDVARLEKSTAIITQSSGSPIKRSKPFKYSYQKEIVLYAHYMKLDYFSTECTYAPEAFRGTAREYMKNLEAVRPSCIIDIIQSGENLALKAKKSNAGKRVVKFVDGNRCARCGYLSSNNICKACMLLEGLEKSRAQVAIENDTSADGAALKLRALEKLSF</sequence>
<feature type="chain" id="PRO_0000219889" description="Cytoplasmic tRNA 2-thiolation protein 1">
    <location>
        <begin position="1"/>
        <end position="359"/>
    </location>
</feature>
<feature type="sequence conflict" description="In Ref. 1; AAC49498." evidence="9" ref="1">
    <original>KLSF</original>
    <variation>NSA</variation>
    <location>
        <begin position="356"/>
        <end position="359"/>
    </location>
</feature>
<organism>
    <name type="scientific">Saccharomyces cerevisiae (strain ATCC 204508 / S288c)</name>
    <name type="common">Baker's yeast</name>
    <dbReference type="NCBI Taxonomy" id="559292"/>
    <lineage>
        <taxon>Eukaryota</taxon>
        <taxon>Fungi</taxon>
        <taxon>Dikarya</taxon>
        <taxon>Ascomycota</taxon>
        <taxon>Saccharomycotina</taxon>
        <taxon>Saccharomycetes</taxon>
        <taxon>Saccharomycetales</taxon>
        <taxon>Saccharomycetaceae</taxon>
        <taxon>Saccharomyces</taxon>
    </lineage>
</organism>
<accession>P53088</accession>
<accession>D6VTU4</accession>
<accession>Q92322</accession>
<name>CTU1_YEAST</name>
<reference key="1">
    <citation type="journal article" date="1996" name="Yeast">
        <title>Lambda clone B22 contains a 7676 bp genomic fragment of Saccharomyces cerevisiae chromosome VII spanning the VAM7-SPM2 intergenic region and containing three novel transcribed open reading frames.</title>
        <authorList>
            <person name="Kail M."/>
            <person name="Juettner E."/>
            <person name="Vaux D."/>
        </authorList>
    </citation>
    <scope>NUCLEOTIDE SEQUENCE [GENOMIC DNA]</scope>
    <source>
        <strain>ATCC 204508 / S288c</strain>
    </source>
</reference>
<reference key="2">
    <citation type="journal article" date="1997" name="Yeast">
        <title>Analysis of 21.7 kb DNA sequence from the left arm of chromosome VII reveals 11 open reading frames: two correspond to new genes.</title>
        <authorList>
            <person name="Feuermann M."/>
            <person name="Simeonava L."/>
            <person name="Souciet J.-L."/>
            <person name="Potier S."/>
        </authorList>
    </citation>
    <scope>NUCLEOTIDE SEQUENCE [GENOMIC DNA]</scope>
    <source>
        <strain>ATCC 96604 / S288c / FY1679</strain>
    </source>
</reference>
<reference key="3">
    <citation type="journal article" date="1997" name="Nature">
        <title>The nucleotide sequence of Saccharomyces cerevisiae chromosome VII.</title>
        <authorList>
            <person name="Tettelin H."/>
            <person name="Agostoni-Carbone M.L."/>
            <person name="Albermann K."/>
            <person name="Albers M."/>
            <person name="Arroyo J."/>
            <person name="Backes U."/>
            <person name="Barreiros T."/>
            <person name="Bertani I."/>
            <person name="Bjourson A.J."/>
            <person name="Brueckner M."/>
            <person name="Bruschi C.V."/>
            <person name="Carignani G."/>
            <person name="Castagnoli L."/>
            <person name="Cerdan E."/>
            <person name="Clemente M.L."/>
            <person name="Coblenz A."/>
            <person name="Coglievina M."/>
            <person name="Coissac E."/>
            <person name="Defoor E."/>
            <person name="Del Bino S."/>
            <person name="Delius H."/>
            <person name="Delneri D."/>
            <person name="de Wergifosse P."/>
            <person name="Dujon B."/>
            <person name="Durand P."/>
            <person name="Entian K.-D."/>
            <person name="Eraso P."/>
            <person name="Escribano V."/>
            <person name="Fabiani L."/>
            <person name="Fartmann B."/>
            <person name="Feroli F."/>
            <person name="Feuermann M."/>
            <person name="Frontali L."/>
            <person name="Garcia-Gonzalez M."/>
            <person name="Garcia-Saez M.I."/>
            <person name="Goffeau A."/>
            <person name="Guerreiro P."/>
            <person name="Hani J."/>
            <person name="Hansen M."/>
            <person name="Hebling U."/>
            <person name="Hernandez K."/>
            <person name="Heumann K."/>
            <person name="Hilger F."/>
            <person name="Hofmann B."/>
            <person name="Indge K.J."/>
            <person name="James C.M."/>
            <person name="Klima R."/>
            <person name="Koetter P."/>
            <person name="Kramer B."/>
            <person name="Kramer W."/>
            <person name="Lauquin G."/>
            <person name="Leuther H."/>
            <person name="Louis E.J."/>
            <person name="Maillier E."/>
            <person name="Marconi A."/>
            <person name="Martegani E."/>
            <person name="Mazon M.J."/>
            <person name="Mazzoni C."/>
            <person name="McReynolds A.D.K."/>
            <person name="Melchioretto P."/>
            <person name="Mewes H.-W."/>
            <person name="Minenkova O."/>
            <person name="Mueller-Auer S."/>
            <person name="Nawrocki A."/>
            <person name="Netter P."/>
            <person name="Neu R."/>
            <person name="Nombela C."/>
            <person name="Oliver S.G."/>
            <person name="Panzeri L."/>
            <person name="Paoluzi S."/>
            <person name="Plevani P."/>
            <person name="Portetelle D."/>
            <person name="Portillo F."/>
            <person name="Potier S."/>
            <person name="Purnelle B."/>
            <person name="Rieger M."/>
            <person name="Riles L."/>
            <person name="Rinaldi T."/>
            <person name="Robben J."/>
            <person name="Rodrigues-Pousada C."/>
            <person name="Rodriguez-Belmonte E."/>
            <person name="Rodriguez-Torres A.M."/>
            <person name="Rose M."/>
            <person name="Ruzzi M."/>
            <person name="Saliola M."/>
            <person name="Sanchez-Perez M."/>
            <person name="Schaefer B."/>
            <person name="Schaefer M."/>
            <person name="Scharfe M."/>
            <person name="Schmidheini T."/>
            <person name="Schreer A."/>
            <person name="Skala J."/>
            <person name="Souciet J.-L."/>
            <person name="Steensma H.Y."/>
            <person name="Talla E."/>
            <person name="Thierry A."/>
            <person name="Vandenbol M."/>
            <person name="van der Aart Q.J.M."/>
            <person name="Van Dyck L."/>
            <person name="Vanoni M."/>
            <person name="Verhasselt P."/>
            <person name="Voet M."/>
            <person name="Volckaert G."/>
            <person name="Wambutt R."/>
            <person name="Watson M.D."/>
            <person name="Weber N."/>
            <person name="Wedler E."/>
            <person name="Wedler H."/>
            <person name="Wipfli P."/>
            <person name="Wolf K."/>
            <person name="Wright L.F."/>
            <person name="Zaccaria P."/>
            <person name="Zimmermann M."/>
            <person name="Zollner A."/>
            <person name="Kleine K."/>
        </authorList>
    </citation>
    <scope>NUCLEOTIDE SEQUENCE [LARGE SCALE GENOMIC DNA]</scope>
    <source>
        <strain>ATCC 204508 / S288c</strain>
    </source>
</reference>
<reference key="4">
    <citation type="journal article" date="2014" name="G3 (Bethesda)">
        <title>The reference genome sequence of Saccharomyces cerevisiae: Then and now.</title>
        <authorList>
            <person name="Engel S.R."/>
            <person name="Dietrich F.S."/>
            <person name="Fisk D.G."/>
            <person name="Binkley G."/>
            <person name="Balakrishnan R."/>
            <person name="Costanzo M.C."/>
            <person name="Dwight S.S."/>
            <person name="Hitz B.C."/>
            <person name="Karra K."/>
            <person name="Nash R.S."/>
            <person name="Weng S."/>
            <person name="Wong E.D."/>
            <person name="Lloyd P."/>
            <person name="Skrzypek M.S."/>
            <person name="Miyasato S.R."/>
            <person name="Simison M."/>
            <person name="Cherry J.M."/>
        </authorList>
    </citation>
    <scope>GENOME REANNOTATION</scope>
    <source>
        <strain>ATCC 204508 / S288c</strain>
    </source>
</reference>
<reference key="5">
    <citation type="journal article" date="2003" name="Genome Biol.">
        <title>Reinvestigation of the Saccharomyces cerevisiae genome annotation by comparison to the genome of a related fungus: Ashbya gossypii.</title>
        <authorList>
            <person name="Brachat S."/>
            <person name="Dietrich F.S."/>
            <person name="Voegeli S."/>
            <person name="Zhang Z."/>
            <person name="Stuart L."/>
            <person name="Lerch A."/>
            <person name="Gates K."/>
            <person name="Gaffney T.D."/>
            <person name="Philippsen P."/>
        </authorList>
    </citation>
    <scope>IDENTIFICATION OF FRAMESHIFTS</scope>
</reference>
<reference key="6">
    <citation type="journal article" date="2003" name="Mol. Biol. Cell">
        <title>Urmylation: a ubiquitin-like pathway that functions during invasive growth and budding in yeast.</title>
        <authorList>
            <person name="Goehring A.S."/>
            <person name="Rivers D.M."/>
            <person name="Sprague G.F. Jr."/>
        </authorList>
    </citation>
    <scope>FUNCTION</scope>
</reference>
<reference key="7">
    <citation type="journal article" date="2003" name="Nature">
        <title>Global analysis of protein localization in budding yeast.</title>
        <authorList>
            <person name="Huh W.-K."/>
            <person name="Falvo J.V."/>
            <person name="Gerke L.C."/>
            <person name="Carroll A.S."/>
            <person name="Howson R.W."/>
            <person name="Weissman J.S."/>
            <person name="O'Shea E.K."/>
        </authorList>
    </citation>
    <scope>SUBCELLULAR LOCATION [LARGE SCALE ANALYSIS]</scope>
</reference>
<reference key="8">
    <citation type="journal article" date="2007" name="RNA">
        <title>A conserved modified wobble nucleoside (mcm5s2U) in lysyl-tRNA is required for viability in yeast.</title>
        <authorList>
            <person name="Bjoerk G.R."/>
            <person name="Huang B."/>
            <person name="Persson O.P."/>
            <person name="Bystroem A.S."/>
        </authorList>
    </citation>
    <scope>FUNCTION</scope>
</reference>
<reference key="9">
    <citation type="journal article" date="2008" name="J. Biol. Chem.">
        <title>Thio-modification of yeast cytosolic tRNA requires a ubiquitin-related system that resembles bacterial sulfur transfer systems.</title>
        <authorList>
            <person name="Nakai Y."/>
            <person name="Nakai M."/>
            <person name="Hayashi H."/>
        </authorList>
    </citation>
    <scope>FUNCTION</scope>
    <scope>SUBCELLULAR LOCATION</scope>
    <scope>SUBUNIT</scope>
</reference>
<reference key="10">
    <citation type="journal article" date="2008" name="Mol. Cell. Biol.">
        <title>Eukaryotic wobble uridine modifications promote a functionally redundant decoding system.</title>
        <authorList>
            <person name="Johansson M.J.O."/>
            <person name="Esberg A."/>
            <person name="Huang B."/>
            <person name="Bjoerk G.R."/>
            <person name="Bystroem A.S."/>
        </authorList>
    </citation>
    <scope>FUNCTION</scope>
</reference>
<reference key="11">
    <citation type="journal article" date="2008" name="RNA">
        <title>A genome-wide screen identifies genes required for formation of the wobble nucleoside 5-methoxycarbonylmethyl-2-thiouridine in Saccharomyces cerevisiae.</title>
        <authorList>
            <person name="Huang B."/>
            <person name="Lu J."/>
            <person name="Bystroem A.S."/>
        </authorList>
    </citation>
    <scope>FUNCTION IN 2-THIOLATION OF TRNA</scope>
</reference>
<reference key="12">
    <citation type="journal article" date="2009" name="Nature">
        <title>Ubiquitin-related modifier Urm1 acts as a sulphur carrier in thiolation of eukaryotic transfer RNA.</title>
        <authorList>
            <person name="Leidel S."/>
            <person name="Pedrioli P.G.A."/>
            <person name="Bucher T."/>
            <person name="Brost R."/>
            <person name="Costanzo M."/>
            <person name="Schmidt A."/>
            <person name="Aebersold R."/>
            <person name="Boone C."/>
            <person name="Hofmann K."/>
            <person name="Peter M."/>
        </authorList>
    </citation>
    <scope>FUNCTION IN 2-THIOLATION OF TRNA</scope>
    <scope>TRNA-BINDING</scope>
    <scope>INTERACTION WITH NCS2 AND URM1</scope>
</reference>
<reference key="13">
    <citation type="journal article" date="2009" name="Nucleic Acids Res.">
        <title>Mechanistic characterization of the sulfur-relay system for eukaryotic 2-thiouridine biogenesis at tRNA wobble positions.</title>
        <authorList>
            <person name="Noma A."/>
            <person name="Sakaguchi Y."/>
            <person name="Suzuki T."/>
        </authorList>
    </citation>
    <scope>FUNCTION IN 2-THIOLATION OF TRNA</scope>
</reference>
<proteinExistence type="evidence at protein level"/>
<evidence type="ECO:0000255" key="1">
    <source>
        <dbReference type="HAMAP-Rule" id="MF_03053"/>
    </source>
</evidence>
<evidence type="ECO:0000269" key="2">
    <source>
    </source>
</evidence>
<evidence type="ECO:0000269" key="3">
    <source>
    </source>
</evidence>
<evidence type="ECO:0000269" key="4">
    <source>
    </source>
</evidence>
<evidence type="ECO:0000269" key="5">
    <source>
    </source>
</evidence>
<evidence type="ECO:0000269" key="6">
    <source>
    </source>
</evidence>
<evidence type="ECO:0000269" key="7">
    <source>
    </source>
</evidence>
<evidence type="ECO:0000269" key="8">
    <source>
    </source>
</evidence>
<evidence type="ECO:0000305" key="9"/>